<keyword id="KW-0227">DNA damage</keyword>
<keyword id="KW-0233">DNA recombination</keyword>
<keyword id="KW-0234">DNA repair</keyword>
<keyword id="KW-0235">DNA replication</keyword>
<keyword id="KW-0238">DNA-binding</keyword>
<keyword id="KW-1185">Reference proteome</keyword>
<comment type="function">
    <text evidence="1">Plays an important role in DNA replication, recombination and repair. Binds to ssDNA and to an array of partner proteins to recruit them to their sites of action during DNA metabolism.</text>
</comment>
<comment type="subunit">
    <text evidence="1">Homotetramer.</text>
</comment>
<sequence>MYNKVILVGNLTRDVELRYLPSGSALAKIGIATNRRFKKQDGSQGDEVCFVDVNLFGRTAEIANQYLKKGSKILIEGRLVLESWTDQSGQKRSKHSVTAESLQMLDSKGASQGGYEGEDYSSYDSTPSYGATSSAKSAPNTQAPYKEPQIPEINIDDDEIPF</sequence>
<organism>
    <name type="scientific">Wolinella succinogenes (strain ATCC 29543 / DSM 1740 / CCUG 13145 / JCM 31913 / LMG 7466 / NCTC 11488 / FDC 602W)</name>
    <name type="common">Vibrio succinogenes</name>
    <dbReference type="NCBI Taxonomy" id="273121"/>
    <lineage>
        <taxon>Bacteria</taxon>
        <taxon>Pseudomonadati</taxon>
        <taxon>Campylobacterota</taxon>
        <taxon>Epsilonproteobacteria</taxon>
        <taxon>Campylobacterales</taxon>
        <taxon>Helicobacteraceae</taxon>
        <taxon>Wolinella</taxon>
    </lineage>
</organism>
<dbReference type="EMBL" id="BX571662">
    <property type="protein sequence ID" value="CAE10882.1"/>
    <property type="molecule type" value="Genomic_DNA"/>
</dbReference>
<dbReference type="RefSeq" id="WP_011139665.1">
    <property type="nucleotide sequence ID" value="NC_005090.1"/>
</dbReference>
<dbReference type="SMR" id="P59933"/>
<dbReference type="STRING" id="273121.WS1872"/>
<dbReference type="KEGG" id="wsu:WS1872"/>
<dbReference type="eggNOG" id="COG0629">
    <property type="taxonomic scope" value="Bacteria"/>
</dbReference>
<dbReference type="HOGENOM" id="CLU_078758_0_1_7"/>
<dbReference type="Proteomes" id="UP000000422">
    <property type="component" value="Chromosome"/>
</dbReference>
<dbReference type="GO" id="GO:0009295">
    <property type="term" value="C:nucleoid"/>
    <property type="evidence" value="ECO:0007669"/>
    <property type="project" value="TreeGrafter"/>
</dbReference>
<dbReference type="GO" id="GO:0003697">
    <property type="term" value="F:single-stranded DNA binding"/>
    <property type="evidence" value="ECO:0007669"/>
    <property type="project" value="UniProtKB-UniRule"/>
</dbReference>
<dbReference type="GO" id="GO:0006310">
    <property type="term" value="P:DNA recombination"/>
    <property type="evidence" value="ECO:0007669"/>
    <property type="project" value="UniProtKB-UniRule"/>
</dbReference>
<dbReference type="GO" id="GO:0006281">
    <property type="term" value="P:DNA repair"/>
    <property type="evidence" value="ECO:0007669"/>
    <property type="project" value="UniProtKB-UniRule"/>
</dbReference>
<dbReference type="GO" id="GO:0006260">
    <property type="term" value="P:DNA replication"/>
    <property type="evidence" value="ECO:0007669"/>
    <property type="project" value="UniProtKB-UniRule"/>
</dbReference>
<dbReference type="CDD" id="cd04496">
    <property type="entry name" value="SSB_OBF"/>
    <property type="match status" value="1"/>
</dbReference>
<dbReference type="Gene3D" id="2.40.50.140">
    <property type="entry name" value="Nucleic acid-binding proteins"/>
    <property type="match status" value="1"/>
</dbReference>
<dbReference type="HAMAP" id="MF_00984">
    <property type="entry name" value="SSB"/>
    <property type="match status" value="1"/>
</dbReference>
<dbReference type="InterPro" id="IPR012340">
    <property type="entry name" value="NA-bd_OB-fold"/>
</dbReference>
<dbReference type="InterPro" id="IPR000424">
    <property type="entry name" value="Primosome_PriB/ssb"/>
</dbReference>
<dbReference type="InterPro" id="IPR011344">
    <property type="entry name" value="ssDNA-bd"/>
</dbReference>
<dbReference type="NCBIfam" id="NF006297">
    <property type="entry name" value="PRK08486.1"/>
    <property type="match status" value="1"/>
</dbReference>
<dbReference type="NCBIfam" id="TIGR00621">
    <property type="entry name" value="ssb"/>
    <property type="match status" value="1"/>
</dbReference>
<dbReference type="PANTHER" id="PTHR10302">
    <property type="entry name" value="SINGLE-STRANDED DNA-BINDING PROTEIN"/>
    <property type="match status" value="1"/>
</dbReference>
<dbReference type="PANTHER" id="PTHR10302:SF27">
    <property type="entry name" value="SINGLE-STRANDED DNA-BINDING PROTEIN"/>
    <property type="match status" value="1"/>
</dbReference>
<dbReference type="Pfam" id="PF00436">
    <property type="entry name" value="SSB"/>
    <property type="match status" value="1"/>
</dbReference>
<dbReference type="PIRSF" id="PIRSF002070">
    <property type="entry name" value="SSB"/>
    <property type="match status" value="1"/>
</dbReference>
<dbReference type="SUPFAM" id="SSF50249">
    <property type="entry name" value="Nucleic acid-binding proteins"/>
    <property type="match status" value="1"/>
</dbReference>
<dbReference type="PROSITE" id="PS50935">
    <property type="entry name" value="SSB"/>
    <property type="match status" value="1"/>
</dbReference>
<proteinExistence type="inferred from homology"/>
<gene>
    <name type="primary">ssb</name>
    <name type="ordered locus">WS1872</name>
</gene>
<protein>
    <recommendedName>
        <fullName evidence="1">Single-stranded DNA-binding protein</fullName>
        <shortName evidence="1">SSB</shortName>
    </recommendedName>
</protein>
<reference key="1">
    <citation type="journal article" date="2003" name="Proc. Natl. Acad. Sci. U.S.A.">
        <title>Complete genome sequence and analysis of Wolinella succinogenes.</title>
        <authorList>
            <person name="Baar C."/>
            <person name="Eppinger M."/>
            <person name="Raddatz G."/>
            <person name="Simon J."/>
            <person name="Lanz C."/>
            <person name="Klimmek O."/>
            <person name="Nandakumar R."/>
            <person name="Gross R."/>
            <person name="Rosinus A."/>
            <person name="Keller H."/>
            <person name="Jagtap P."/>
            <person name="Linke B."/>
            <person name="Meyer F."/>
            <person name="Lederer H."/>
            <person name="Schuster S.C."/>
        </authorList>
    </citation>
    <scope>NUCLEOTIDE SEQUENCE [LARGE SCALE GENOMIC DNA]</scope>
    <source>
        <strain>ATCC 29543 / DSM 1740 / CCUG 13145 / JCM 31913 / LMG 7466 / NCTC 11488 / FDC 602W</strain>
    </source>
</reference>
<accession>P59933</accession>
<feature type="chain" id="PRO_0000096140" description="Single-stranded DNA-binding protein">
    <location>
        <begin position="1"/>
        <end position="162"/>
    </location>
</feature>
<feature type="domain" description="SSB" evidence="1">
    <location>
        <begin position="1"/>
        <end position="106"/>
    </location>
</feature>
<feature type="region of interest" description="Disordered" evidence="2">
    <location>
        <begin position="85"/>
        <end position="162"/>
    </location>
</feature>
<feature type="short sequence motif" description="Important for interaction with partner proteins" evidence="1">
    <location>
        <begin position="157"/>
        <end position="162"/>
    </location>
</feature>
<feature type="compositionally biased region" description="Polar residues" evidence="2">
    <location>
        <begin position="85"/>
        <end position="101"/>
    </location>
</feature>
<feature type="compositionally biased region" description="Polar residues" evidence="2">
    <location>
        <begin position="122"/>
        <end position="143"/>
    </location>
</feature>
<evidence type="ECO:0000255" key="1">
    <source>
        <dbReference type="HAMAP-Rule" id="MF_00984"/>
    </source>
</evidence>
<evidence type="ECO:0000256" key="2">
    <source>
        <dbReference type="SAM" id="MobiDB-lite"/>
    </source>
</evidence>
<name>SSB_WOLSU</name>